<proteinExistence type="inferred from homology"/>
<reference key="1">
    <citation type="journal article" date="2002" name="Proc. Natl. Acad. Sci. U.S.A.">
        <title>The complete genome sequence of Chlorobium tepidum TLS, a photosynthetic, anaerobic, green-sulfur bacterium.</title>
        <authorList>
            <person name="Eisen J.A."/>
            <person name="Nelson K.E."/>
            <person name="Paulsen I.T."/>
            <person name="Heidelberg J.F."/>
            <person name="Wu M."/>
            <person name="Dodson R.J."/>
            <person name="DeBoy R.T."/>
            <person name="Gwinn M.L."/>
            <person name="Nelson W.C."/>
            <person name="Haft D.H."/>
            <person name="Hickey E.K."/>
            <person name="Peterson J.D."/>
            <person name="Durkin A.S."/>
            <person name="Kolonay J.F."/>
            <person name="Yang F."/>
            <person name="Holt I.E."/>
            <person name="Umayam L.A."/>
            <person name="Mason T.M."/>
            <person name="Brenner M."/>
            <person name="Shea T.P."/>
            <person name="Parksey D.S."/>
            <person name="Nierman W.C."/>
            <person name="Feldblyum T.V."/>
            <person name="Hansen C.L."/>
            <person name="Craven M.B."/>
            <person name="Radune D."/>
            <person name="Vamathevan J.J."/>
            <person name="Khouri H.M."/>
            <person name="White O."/>
            <person name="Gruber T.M."/>
            <person name="Ketchum K.A."/>
            <person name="Venter J.C."/>
            <person name="Tettelin H."/>
            <person name="Bryant D.A."/>
            <person name="Fraser C.M."/>
        </authorList>
    </citation>
    <scope>NUCLEOTIDE SEQUENCE [LARGE SCALE GENOMIC DNA]</scope>
    <source>
        <strain>ATCC 49652 / DSM 12025 / NBRC 103806 / TLS</strain>
    </source>
</reference>
<comment type="function">
    <text evidence="1">Digests double-stranded RNA. Involved in the processing of primary rRNA transcript to yield the immediate precursors to the large and small rRNAs (23S and 16S). Processes some mRNAs, and tRNAs when they are encoded in the rRNA operon. Processes pre-crRNA and tracrRNA of type II CRISPR loci if present in the organism.</text>
</comment>
<comment type="catalytic activity">
    <reaction evidence="1">
        <text>Endonucleolytic cleavage to 5'-phosphomonoester.</text>
        <dbReference type="EC" id="3.1.26.3"/>
    </reaction>
</comment>
<comment type="cofactor">
    <cofactor evidence="1">
        <name>Mg(2+)</name>
        <dbReference type="ChEBI" id="CHEBI:18420"/>
    </cofactor>
</comment>
<comment type="subunit">
    <text evidence="1">Homodimer.</text>
</comment>
<comment type="subcellular location">
    <subcellularLocation>
        <location evidence="1">Cytoplasm</location>
    </subcellularLocation>
</comment>
<comment type="similarity">
    <text evidence="1">Belongs to the ribonuclease III family.</text>
</comment>
<dbReference type="EC" id="3.1.26.3" evidence="1"/>
<dbReference type="EMBL" id="AE006470">
    <property type="protein sequence ID" value="AAM73335.1"/>
    <property type="molecule type" value="Genomic_DNA"/>
</dbReference>
<dbReference type="RefSeq" id="NP_662993.1">
    <property type="nucleotide sequence ID" value="NC_002932.3"/>
</dbReference>
<dbReference type="RefSeq" id="WP_010933773.1">
    <property type="nucleotide sequence ID" value="NC_002932.3"/>
</dbReference>
<dbReference type="SMR" id="Q8KAN7"/>
<dbReference type="STRING" id="194439.CT2119"/>
<dbReference type="EnsemblBacteria" id="AAM73335">
    <property type="protein sequence ID" value="AAM73335"/>
    <property type="gene ID" value="CT2119"/>
</dbReference>
<dbReference type="KEGG" id="cte:CT2119"/>
<dbReference type="PATRIC" id="fig|194439.7.peg.1920"/>
<dbReference type="eggNOG" id="COG0571">
    <property type="taxonomic scope" value="Bacteria"/>
</dbReference>
<dbReference type="HOGENOM" id="CLU_000907_1_0_10"/>
<dbReference type="OrthoDB" id="9805026at2"/>
<dbReference type="Proteomes" id="UP000001007">
    <property type="component" value="Chromosome"/>
</dbReference>
<dbReference type="GO" id="GO:0005737">
    <property type="term" value="C:cytoplasm"/>
    <property type="evidence" value="ECO:0007669"/>
    <property type="project" value="UniProtKB-SubCell"/>
</dbReference>
<dbReference type="GO" id="GO:0003725">
    <property type="term" value="F:double-stranded RNA binding"/>
    <property type="evidence" value="ECO:0007669"/>
    <property type="project" value="TreeGrafter"/>
</dbReference>
<dbReference type="GO" id="GO:0046872">
    <property type="term" value="F:metal ion binding"/>
    <property type="evidence" value="ECO:0007669"/>
    <property type="project" value="UniProtKB-KW"/>
</dbReference>
<dbReference type="GO" id="GO:0004525">
    <property type="term" value="F:ribonuclease III activity"/>
    <property type="evidence" value="ECO:0007669"/>
    <property type="project" value="UniProtKB-UniRule"/>
</dbReference>
<dbReference type="GO" id="GO:0019843">
    <property type="term" value="F:rRNA binding"/>
    <property type="evidence" value="ECO:0007669"/>
    <property type="project" value="UniProtKB-KW"/>
</dbReference>
<dbReference type="GO" id="GO:0006397">
    <property type="term" value="P:mRNA processing"/>
    <property type="evidence" value="ECO:0007669"/>
    <property type="project" value="UniProtKB-UniRule"/>
</dbReference>
<dbReference type="GO" id="GO:0010468">
    <property type="term" value="P:regulation of gene expression"/>
    <property type="evidence" value="ECO:0007669"/>
    <property type="project" value="TreeGrafter"/>
</dbReference>
<dbReference type="GO" id="GO:0006364">
    <property type="term" value="P:rRNA processing"/>
    <property type="evidence" value="ECO:0007669"/>
    <property type="project" value="UniProtKB-UniRule"/>
</dbReference>
<dbReference type="GO" id="GO:0008033">
    <property type="term" value="P:tRNA processing"/>
    <property type="evidence" value="ECO:0007669"/>
    <property type="project" value="UniProtKB-KW"/>
</dbReference>
<dbReference type="CDD" id="cd10845">
    <property type="entry name" value="DSRM_RNAse_III_family"/>
    <property type="match status" value="1"/>
</dbReference>
<dbReference type="CDD" id="cd00593">
    <property type="entry name" value="RIBOc"/>
    <property type="match status" value="1"/>
</dbReference>
<dbReference type="FunFam" id="1.10.1520.10:FF:000001">
    <property type="entry name" value="Ribonuclease 3"/>
    <property type="match status" value="1"/>
</dbReference>
<dbReference type="Gene3D" id="3.30.160.20">
    <property type="match status" value="1"/>
</dbReference>
<dbReference type="Gene3D" id="1.10.1520.10">
    <property type="entry name" value="Ribonuclease III domain"/>
    <property type="match status" value="1"/>
</dbReference>
<dbReference type="HAMAP" id="MF_00104">
    <property type="entry name" value="RNase_III"/>
    <property type="match status" value="1"/>
</dbReference>
<dbReference type="InterPro" id="IPR014720">
    <property type="entry name" value="dsRBD_dom"/>
</dbReference>
<dbReference type="InterPro" id="IPR011907">
    <property type="entry name" value="RNase_III"/>
</dbReference>
<dbReference type="InterPro" id="IPR000999">
    <property type="entry name" value="RNase_III_dom"/>
</dbReference>
<dbReference type="InterPro" id="IPR036389">
    <property type="entry name" value="RNase_III_sf"/>
</dbReference>
<dbReference type="NCBIfam" id="TIGR02191">
    <property type="entry name" value="RNaseIII"/>
    <property type="match status" value="1"/>
</dbReference>
<dbReference type="PANTHER" id="PTHR11207:SF0">
    <property type="entry name" value="RIBONUCLEASE 3"/>
    <property type="match status" value="1"/>
</dbReference>
<dbReference type="PANTHER" id="PTHR11207">
    <property type="entry name" value="RIBONUCLEASE III"/>
    <property type="match status" value="1"/>
</dbReference>
<dbReference type="Pfam" id="PF00035">
    <property type="entry name" value="dsrm"/>
    <property type="match status" value="1"/>
</dbReference>
<dbReference type="Pfam" id="PF14622">
    <property type="entry name" value="Ribonucleas_3_3"/>
    <property type="match status" value="1"/>
</dbReference>
<dbReference type="SMART" id="SM00358">
    <property type="entry name" value="DSRM"/>
    <property type="match status" value="1"/>
</dbReference>
<dbReference type="SMART" id="SM00535">
    <property type="entry name" value="RIBOc"/>
    <property type="match status" value="1"/>
</dbReference>
<dbReference type="SUPFAM" id="SSF54768">
    <property type="entry name" value="dsRNA-binding domain-like"/>
    <property type="match status" value="1"/>
</dbReference>
<dbReference type="SUPFAM" id="SSF69065">
    <property type="entry name" value="RNase III domain-like"/>
    <property type="match status" value="1"/>
</dbReference>
<dbReference type="PROSITE" id="PS50137">
    <property type="entry name" value="DS_RBD"/>
    <property type="match status" value="1"/>
</dbReference>
<dbReference type="PROSITE" id="PS00517">
    <property type="entry name" value="RNASE_3_1"/>
    <property type="match status" value="1"/>
</dbReference>
<dbReference type="PROSITE" id="PS50142">
    <property type="entry name" value="RNASE_3_2"/>
    <property type="match status" value="1"/>
</dbReference>
<gene>
    <name evidence="1" type="primary">rnc</name>
    <name type="ordered locus">CT2119</name>
</gene>
<evidence type="ECO:0000255" key="1">
    <source>
        <dbReference type="HAMAP-Rule" id="MF_00104"/>
    </source>
</evidence>
<evidence type="ECO:0000256" key="2">
    <source>
        <dbReference type="SAM" id="MobiDB-lite"/>
    </source>
</evidence>
<sequence>MSLQFLRSEASDGAGETSDASSADFLLDPQTATHLARLTGRPCNRLIYRTALTHRSVLHDHHSEEHKPESNQRLEFLGDAVLDLLISEHLFKQFPGSDEGHLSSNRAKIVNRKSLAAFALELQLGEHLIIGESADKQKIRTSESALADALEALVGAIYLDQGLAGAERFITNHVIAKVDLHKLVEAEYNYKSRLIEYTQSRQLPPPLYTVITEEGAEHEKTFVVEVSCNGQPLGRGTAPRKKDAEQLAAKEAMKRLESGDLGNLNEPSPQNS</sequence>
<name>RNC_CHLTE</name>
<keyword id="KW-0963">Cytoplasm</keyword>
<keyword id="KW-0255">Endonuclease</keyword>
<keyword id="KW-0378">Hydrolase</keyword>
<keyword id="KW-0460">Magnesium</keyword>
<keyword id="KW-0479">Metal-binding</keyword>
<keyword id="KW-0507">mRNA processing</keyword>
<keyword id="KW-0540">Nuclease</keyword>
<keyword id="KW-1185">Reference proteome</keyword>
<keyword id="KW-0694">RNA-binding</keyword>
<keyword id="KW-0698">rRNA processing</keyword>
<keyword id="KW-0699">rRNA-binding</keyword>
<keyword id="KW-0819">tRNA processing</keyword>
<accession>Q8KAN7</accession>
<protein>
    <recommendedName>
        <fullName evidence="1">Ribonuclease 3</fullName>
        <ecNumber evidence="1">3.1.26.3</ecNumber>
    </recommendedName>
    <alternativeName>
        <fullName evidence="1">Ribonuclease III</fullName>
        <shortName evidence="1">RNase III</shortName>
    </alternativeName>
</protein>
<organism>
    <name type="scientific">Chlorobaculum tepidum (strain ATCC 49652 / DSM 12025 / NBRC 103806 / TLS)</name>
    <name type="common">Chlorobium tepidum</name>
    <dbReference type="NCBI Taxonomy" id="194439"/>
    <lineage>
        <taxon>Bacteria</taxon>
        <taxon>Pseudomonadati</taxon>
        <taxon>Chlorobiota</taxon>
        <taxon>Chlorobiia</taxon>
        <taxon>Chlorobiales</taxon>
        <taxon>Chlorobiaceae</taxon>
        <taxon>Chlorobaculum</taxon>
    </lineage>
</organism>
<feature type="chain" id="PRO_0000180388" description="Ribonuclease 3">
    <location>
        <begin position="1"/>
        <end position="272"/>
    </location>
</feature>
<feature type="domain" description="RNase III" evidence="1">
    <location>
        <begin position="31"/>
        <end position="162"/>
    </location>
</feature>
<feature type="domain" description="DRBM" evidence="1">
    <location>
        <begin position="189"/>
        <end position="258"/>
    </location>
</feature>
<feature type="region of interest" description="Disordered" evidence="2">
    <location>
        <begin position="1"/>
        <end position="22"/>
    </location>
</feature>
<feature type="active site" evidence="1">
    <location>
        <position position="79"/>
    </location>
</feature>
<feature type="active site" evidence="1">
    <location>
        <position position="151"/>
    </location>
</feature>
<feature type="binding site" evidence="1">
    <location>
        <position position="75"/>
    </location>
    <ligand>
        <name>Mg(2+)</name>
        <dbReference type="ChEBI" id="CHEBI:18420"/>
    </ligand>
</feature>
<feature type="binding site" evidence="1">
    <location>
        <position position="148"/>
    </location>
    <ligand>
        <name>Mg(2+)</name>
        <dbReference type="ChEBI" id="CHEBI:18420"/>
    </ligand>
</feature>
<feature type="binding site" evidence="1">
    <location>
        <position position="151"/>
    </location>
    <ligand>
        <name>Mg(2+)</name>
        <dbReference type="ChEBI" id="CHEBI:18420"/>
    </ligand>
</feature>